<reference key="1">
    <citation type="journal article" date="2002" name="Nature">
        <title>Genome sequence of the human malaria parasite Plasmodium falciparum.</title>
        <authorList>
            <person name="Gardner M.J."/>
            <person name="Hall N."/>
            <person name="Fung E."/>
            <person name="White O."/>
            <person name="Berriman M."/>
            <person name="Hyman R.W."/>
            <person name="Carlton J.M."/>
            <person name="Pain A."/>
            <person name="Nelson K.E."/>
            <person name="Bowman S."/>
            <person name="Paulsen I.T."/>
            <person name="James K.D."/>
            <person name="Eisen J.A."/>
            <person name="Rutherford K.M."/>
            <person name="Salzberg S.L."/>
            <person name="Craig A."/>
            <person name="Kyes S."/>
            <person name="Chan M.-S."/>
            <person name="Nene V."/>
            <person name="Shallom S.J."/>
            <person name="Suh B."/>
            <person name="Peterson J."/>
            <person name="Angiuoli S."/>
            <person name="Pertea M."/>
            <person name="Allen J."/>
            <person name="Selengut J."/>
            <person name="Haft D."/>
            <person name="Mather M.W."/>
            <person name="Vaidya A.B."/>
            <person name="Martin D.M.A."/>
            <person name="Fairlamb A.H."/>
            <person name="Fraunholz M.J."/>
            <person name="Roos D.S."/>
            <person name="Ralph S.A."/>
            <person name="McFadden G.I."/>
            <person name="Cummings L.M."/>
            <person name="Subramanian G.M."/>
            <person name="Mungall C."/>
            <person name="Venter J.C."/>
            <person name="Carucci D.J."/>
            <person name="Hoffman S.L."/>
            <person name="Newbold C."/>
            <person name="Davis R.W."/>
            <person name="Fraser C.M."/>
            <person name="Barrell B.G."/>
        </authorList>
    </citation>
    <scope>NUCLEOTIDE SEQUENCE [LARGE SCALE GENOMIC DNA]</scope>
    <source>
        <strain>3D7</strain>
    </source>
</reference>
<reference key="2">
    <citation type="journal article" date="2002" name="Nature">
        <title>Sequence of Plasmodium falciparum chromosomes 1, 3-9 and 13.</title>
        <authorList>
            <person name="Hall N."/>
            <person name="Pain A."/>
            <person name="Berriman M."/>
            <person name="Churcher C.M."/>
            <person name="Harris B."/>
            <person name="Harris D."/>
            <person name="Mungall K.L."/>
            <person name="Bowman S."/>
            <person name="Atkin R."/>
            <person name="Baker S."/>
            <person name="Barron A."/>
            <person name="Brooks K."/>
            <person name="Buckee C.O."/>
            <person name="Burrows C."/>
            <person name="Cherevach I."/>
            <person name="Chillingworth C."/>
            <person name="Chillingworth T."/>
            <person name="Christodoulou Z."/>
            <person name="Clark L."/>
            <person name="Clark R."/>
            <person name="Corton C."/>
            <person name="Cronin A."/>
            <person name="Davies R.M."/>
            <person name="Davis P."/>
            <person name="Dear P."/>
            <person name="Dearden F."/>
            <person name="Doggett J."/>
            <person name="Feltwell T."/>
            <person name="Goble A."/>
            <person name="Goodhead I."/>
            <person name="Gwilliam R."/>
            <person name="Hamlin N."/>
            <person name="Hance Z."/>
            <person name="Harper D."/>
            <person name="Hauser H."/>
            <person name="Hornsby T."/>
            <person name="Holroyd S."/>
            <person name="Horrocks P."/>
            <person name="Humphray S."/>
            <person name="Jagels K."/>
            <person name="James K.D."/>
            <person name="Johnson D."/>
            <person name="Kerhornou A."/>
            <person name="Knights A."/>
            <person name="Konfortov B."/>
            <person name="Kyes S."/>
            <person name="Larke N."/>
            <person name="Lawson D."/>
            <person name="Lennard N."/>
            <person name="Line A."/>
            <person name="Maddison M."/>
            <person name="Mclean J."/>
            <person name="Mooney P."/>
            <person name="Moule S."/>
            <person name="Murphy L."/>
            <person name="Oliver K."/>
            <person name="Ormond D."/>
            <person name="Price C."/>
            <person name="Quail M.A."/>
            <person name="Rabbinowitsch E."/>
            <person name="Rajandream M.A."/>
            <person name="Rutter S."/>
            <person name="Rutherford K.M."/>
            <person name="Sanders M."/>
            <person name="Simmonds M."/>
            <person name="Seeger K."/>
            <person name="Sharp S."/>
            <person name="Smith R."/>
            <person name="Squares R."/>
            <person name="Squares S."/>
            <person name="Stevens K."/>
            <person name="Taylor K."/>
            <person name="Tivey A."/>
            <person name="Unwin L."/>
            <person name="Whitehead S."/>
            <person name="Woodward J.R."/>
            <person name="Sulston J.E."/>
            <person name="Craig A."/>
            <person name="Newbold C."/>
            <person name="Barrell B.G."/>
        </authorList>
    </citation>
    <scope>NUCLEOTIDE SEQUENCE [LARGE SCALE GENOMIC DNA]</scope>
    <source>
        <strain>3D7</strain>
    </source>
</reference>
<reference evidence="4" key="3">
    <citation type="journal article" date="2007" name="PLoS ONE">
        <title>Rapid identification of malaria vaccine candidates based on alpha-helical coiled coil protein motif.</title>
        <authorList>
            <person name="Villard V."/>
            <person name="Agak G.W."/>
            <person name="Frank G."/>
            <person name="Jafarshad A."/>
            <person name="Servis C."/>
            <person name="Nebie I."/>
            <person name="Sirima S.B."/>
            <person name="Felger I."/>
            <person name="Arevalo-Herrera M."/>
            <person name="Herrera S."/>
            <person name="Heitz F."/>
            <person name="Baecker V."/>
            <person name="Druilhe P."/>
            <person name="Kajava A.V."/>
            <person name="Corradin G."/>
        </authorList>
    </citation>
    <scope>SYNTHESIS OF 2083-2116</scope>
    <scope>POSSIBLE CANDIDATE MALARIA EPITOPE</scope>
</reference>
<proteinExistence type="evidence at protein level"/>
<comment type="subcellular location">
    <subcellularLocation>
        <location evidence="1 4">Nucleus</location>
    </subcellularLocation>
</comment>
<comment type="biotechnology">
    <text evidence="3">Possible candidate for an effective malaria vaccine as determined by epitope response in sera.</text>
</comment>
<sequence>MSSCSLKCSILPCVHIENNKNELHIENSKDENGINNIIQEDPNNGHNDNINNNDINNNNNNNDNNNTIDNCICEKSSEEISVHTEKCVHTVSLDVNVKDYNFEEFINSFESDRRNILLNTFNYFFYNNFGNLSEVKLKNGSIAHNYYYRKIALNIMNYDYEKEYRLYDDNRKINENSIIMQSSAYCINEENNSRPPLYEDLFLKKTKITNIDDKNTKETIKKYKLPFEPNFYSNRFFFLDNDMNGSLHQSTKNCTKYCNSFVVNYNNVSNCRKKKKKNTNPIIFNNINNNNNNNCDHVKPLCCSYILRFEGPPPHFLIIKFDKVNRKAYIVKRVPVNKNISFNLAKFIAEKYINMLRKNLRKREIKMERKRNNNILNSRTKRGSSKKEHIESNMENNNDNINNNDDDNNSNNNDDNNDNINNNNDNINNNNDNINNNNNSNNNDDDHLVCNNEIVPNNDCGTINNYSNNSSTNYSSDYSFSRNGEVLNEYNEEDLNNYLLNVDINSLPYEDYNSENYVNEKMCKNEYLDIDLENLIFSRDAEKYIKFLSNVKIYFLKKLDDIDYFNTNCKDPFENKIVIIVKMKYDICVKSKVFIFENMKDLESEYEYVDIDENEKDNDNICFKKGGDNTFVSLLNDDGHMNDANNNNNNNINCGDDGNNNNNNNNSFDADINSSSHVGNEPTGDKHETSKKEDTENEEAINAKTEGNFITRNFFGLFKNECNANNGSDKEHLKEEDVCNKNTEEEEKMNIIKSDNVNNNNNNNNNNNNKKEKGKKKKEKDADKNKKHKKKNIHDNNRKKKMTVNYRKKIIQFIRNNIYINSYIYDCFENKYTNNKFFKDDVIIIRNTKSEEQEEEEHQLSYNVPYYIYELNKFVFIKFMKFEKYINKNHDIANGYIKYLLQSNIKCINGYMIGIRWVPNVFAYEYYVYKITEDVKSDFKKENEYMINNNMNGNNNNNNNYNNDRYNNSRNCNTIYNYSLAIEKDSNEITMKYLIDYENKVIDNVLCVLHEYYQTSLFTEHCIFNLFKLVLLRVSLYIGVFNTKVITLDLDKAMYRMKKFSEPISMYDNYGFSENDNNMLLQGGDMLNMEYLMNEVDNNNNNNNNNNNNNVNNISNNGTNLEENANNANNANNPNNANNPNNANNSNNADYVNDYNDGYKEEDDDDEEEDNNLTKKKDEENTNYNININGENMNMNSNMNVEETFDETKNKNNLRITFSSVHFDNEGNKISDNNIYENRAKHVSDSDMNNNNNNNNNTNINYPSSHDKYNELFVKNEKCESESYLPNKLKNKKKVSYNLDNTSISLRNKRSRDVGSNQNCDHNNNSRGGGGGKCYGILKGEGDQFSIKYYSTSANNTSSTLINNKKEYYSNASDFSGTSHLTAKHKYHLRSSNPQSTDNYSSEEYMQRSSMRTRGAERSANRNKMLYKLMNKNGLIEPYWWFFYNLYENACIHEGSTITNNMNNNNNNINGNNYNNYYFNKYNNNNNNNNNNNNNQKKGTCGEDALNEEQKRILEKKYKINLLNHFCAKTEKLKIKYISMVHDIIYKKYMLLNNTIFPRNLHESEILYTLFPHEPHTFMFLYTDDNFQYQNEVFLKQITFSDNINWYHYPLGGQYNNIDLYKNDVHDEKERMVLHINDYYNGLGTSRYVIGKDFYVDHLIMGDSKDSTSNMLMSKNLKYSNLPNYEKVRANYREAHLLNEKEWKNIQNGGYYKTMLHLGEDMEHPYNFGVYQDPITSAYETNRNDYGFTNGILTNKILEPSTSSAVTAAVVSNNTGTTQNNNKYGTNSNNNNNNNNNNNNNNNNNKVFTFERRRRGVKTNEYYDYFVTDKTLLGGKGKFHNVGEKRSVSNTNFGRNNRYYDQMIGEDDDKKNTSDNDLTSLKRRKNGNSKRAKSNNLSNVKGYSIYNVENNGDAQADNGNNNVNNNLKGNMKGNNLNSNNIKSDVINHDDSLIPMGPLPTGVYFDSARKLWRCQWKENGKFKTKGFSLIHYSTLEEARKQCILYRCDVGNIPVKSEWLNPVYVRSSYFYSKKYSSSAHNATSAGTNYTTTAAHRELKTSSLNLSRLKEKTGVSQGVSTANNNDNNVNNMDNNVNNVDNNVNNVDNNLNNVDNNVNNNNVKSSGVEKGFMDGSSKGSNDENYYVGQTNTIGNTNNNRYSTRNNTAACAAANDKGNEIDISILQEFVSKNKEGGGVSVDGGGLLESALIERGLIESGLLDSGSVNKNNMSLRLNSKNVMLGYNGEENNKKKKKKNIVEDNIKNMNNVENIKNIKDIKNVNNMNNMNNMNNMNNYNFLFADKKNKNNNLNIGVKEEEKRRKQVDVVGDGSGTQALKRSKRSKSNSKYKMDLRVGDLKEDFGKDMSNLINEEDIENFRNTFNKEYLKSVLTNDNNNDGINNNNDDNNDDNNDDNNNNNNNNNKNNNKNSSNNKSNNNKKNYNNKNQNNNDNNNDNGNNNNNNNDDNNDDNNIRSNSFFLDGKDINNEYINNENFPNDIQSFFKFLNSKDVKDETKGKKYLDFKLGNGLDGEEEGGGDYDEKEDDLLDENKNGLNFLNDDINNNNNNNNNNNNNNNNNNNNNNNNNYNNDLFEAMKAFMKYNGNMMNNEKGELLYGKGGNNNNNNNNNNSGTYVKNKKSSKYDNKSYGGDGIPRKEMKKERSKKSQKLLNSQVNESSAPASNYKGGGVQFYMNLDTTNLLAASLMTNNIINNLNNQGNGDNSHVNNNYNSNALGDMMKSSNKEGVGLSWSPSNMCPDIFFQDIQNFINFAKRKERMNNGKEENGEGVQTNVRNTNNNAHIVGNNNNNNRNSGSIIENDVYENYLKSLIVQYENEEKLKEKQYVQMNNNNNNNNNNNNNNNNNNVKYFQFGDKEEEEDKENLANLDNDKLEKEKNGGGGVVSSSSSSPTTGFFQKYLNIFSKKKNGNESEEYMNNKSQVDNSKYVECGNGDKETNDYNTRRKKKDEKFSVSSNALYDMSKVLNNNGLGSSMNSYNEAYKKNLNFLLQKSSMNNNNMNNNNMNNNNMNNNNMNNNNMNNNNMNLNVYNNVTGDNNHMDNLDGGNNKGLKKYNNNLGFNNMSEASLYEYFNFAALNNNNGSNILGQDRKKNGHISINTKSSSIFMNGMHMNNYHNSVNNMNSFNSNSDHMEPKYDGYDDNMMRGMVERALSSSLYFDNKQKGKESSNNLNNNNNNNNNIINNMNHMNYINNNNNNIINNMNHMNYINNNNNNNQYVDGQLTENEISNLNVAGNVKSGKKKKGSTNDDENINLIKQSLPKGIYYDHAKKLYRVQYIINNSIKTKGFSVKKLGLAQAKIEAESFRNFCLENGLLNSRKRRLNSPYNKKDESFSMMPDNEEILSNLLFLYNSNMNNSMNKMSINNDGNNNDGNNNDGNNNDDNNNDDNNNDDNNNDGNNNDDNNNEGINNDDNNNEGINNDDNNNEGINNNDDNNNNDDNNNEGINNDDNNDDNNNDNEMSQNE</sequence>
<gene>
    <name type="ORF">PFD0985w</name>
</gene>
<organism>
    <name type="scientific">Plasmodium falciparum (isolate 3D7)</name>
    <dbReference type="NCBI Taxonomy" id="36329"/>
    <lineage>
        <taxon>Eukaryota</taxon>
        <taxon>Sar</taxon>
        <taxon>Alveolata</taxon>
        <taxon>Apicomplexa</taxon>
        <taxon>Aconoidasida</taxon>
        <taxon>Haemosporida</taxon>
        <taxon>Plasmodiidae</taxon>
        <taxon>Plasmodium</taxon>
        <taxon>Plasmodium (Laverania)</taxon>
    </lineage>
</organism>
<evidence type="ECO:0000255" key="1"/>
<evidence type="ECO:0000256" key="2">
    <source>
        <dbReference type="SAM" id="MobiDB-lite"/>
    </source>
</evidence>
<evidence type="ECO:0000269" key="3">
    <source>
    </source>
</evidence>
<evidence type="ECO:0000305" key="4"/>
<feature type="chain" id="PRO_0000370212" description="AP2/ERF domain-containing protein PFD0985w">
    <location>
        <begin position="1"/>
        <end position="3473"/>
    </location>
</feature>
<feature type="DNA-binding region" description="AP2/ERF 1" evidence="1">
    <location>
        <begin position="1957"/>
        <end position="2011"/>
    </location>
</feature>
<feature type="DNA-binding region" description="AP2/ERF 2" evidence="1">
    <location>
        <begin position="3268"/>
        <end position="3321"/>
    </location>
</feature>
<feature type="region of interest" description="Disordered" evidence="2">
    <location>
        <begin position="35"/>
        <end position="61"/>
    </location>
</feature>
<feature type="region of interest" description="Disordered" evidence="2">
    <location>
        <begin position="366"/>
        <end position="450"/>
    </location>
</feature>
<feature type="region of interest" description="Disordered" evidence="2">
    <location>
        <begin position="647"/>
        <end position="704"/>
    </location>
</feature>
<feature type="region of interest" description="Disordered" evidence="2">
    <location>
        <begin position="750"/>
        <end position="801"/>
    </location>
</feature>
<feature type="region of interest" description="Disordered" evidence="2">
    <location>
        <begin position="1096"/>
        <end position="1196"/>
    </location>
</feature>
<feature type="region of interest" description="Disordered" evidence="2">
    <location>
        <begin position="1300"/>
        <end position="1328"/>
    </location>
</feature>
<feature type="region of interest" description="Disordered" evidence="2">
    <location>
        <begin position="1388"/>
        <end position="1418"/>
    </location>
</feature>
<feature type="region of interest" description="Disordered" evidence="2">
    <location>
        <begin position="1773"/>
        <end position="1807"/>
    </location>
</feature>
<feature type="region of interest" description="Disordered" evidence="2">
    <location>
        <begin position="1864"/>
        <end position="1898"/>
    </location>
</feature>
<feature type="region of interest" description="Disordered" evidence="2">
    <location>
        <begin position="2068"/>
        <end position="2088"/>
    </location>
</feature>
<feature type="region of interest" description="Disordered" evidence="2">
    <location>
        <begin position="2319"/>
        <end position="2343"/>
    </location>
</feature>
<feature type="region of interest" description="Disordered" evidence="2">
    <location>
        <begin position="2387"/>
        <end position="2470"/>
    </location>
</feature>
<feature type="region of interest" description="Disordered" evidence="2">
    <location>
        <begin position="2520"/>
        <end position="2584"/>
    </location>
</feature>
<feature type="region of interest" description="Disordered" evidence="2">
    <location>
        <begin position="2609"/>
        <end position="2677"/>
    </location>
</feature>
<feature type="region of interest" description="Disordered" evidence="2">
    <location>
        <begin position="2840"/>
        <end position="2860"/>
    </location>
</feature>
<feature type="region of interest" description="Disordered" evidence="2">
    <location>
        <begin position="2881"/>
        <end position="2902"/>
    </location>
</feature>
<feature type="region of interest" description="Disordered" evidence="2">
    <location>
        <begin position="2937"/>
        <end position="2960"/>
    </location>
</feature>
<feature type="region of interest" description="Disordered" evidence="2">
    <location>
        <begin position="3369"/>
        <end position="3473"/>
    </location>
</feature>
<feature type="compositionally biased region" description="Low complexity" evidence="2">
    <location>
        <begin position="44"/>
        <end position="61"/>
    </location>
</feature>
<feature type="compositionally biased region" description="Low complexity" evidence="2">
    <location>
        <begin position="396"/>
        <end position="442"/>
    </location>
</feature>
<feature type="compositionally biased region" description="Low complexity" evidence="2">
    <location>
        <begin position="647"/>
        <end position="666"/>
    </location>
</feature>
<feature type="compositionally biased region" description="Basic and acidic residues" evidence="2">
    <location>
        <begin position="683"/>
        <end position="694"/>
    </location>
</feature>
<feature type="compositionally biased region" description="Low complexity" evidence="2">
    <location>
        <begin position="751"/>
        <end position="768"/>
    </location>
</feature>
<feature type="compositionally biased region" description="Basic residues" evidence="2">
    <location>
        <begin position="785"/>
        <end position="801"/>
    </location>
</feature>
<feature type="compositionally biased region" description="Low complexity" evidence="2">
    <location>
        <begin position="1098"/>
        <end position="1156"/>
    </location>
</feature>
<feature type="compositionally biased region" description="Acidic residues" evidence="2">
    <location>
        <begin position="1160"/>
        <end position="1171"/>
    </location>
</feature>
<feature type="compositionally biased region" description="Low complexity" evidence="2">
    <location>
        <begin position="1182"/>
        <end position="1196"/>
    </location>
</feature>
<feature type="compositionally biased region" description="Polar residues" evidence="2">
    <location>
        <begin position="1314"/>
        <end position="1326"/>
    </location>
</feature>
<feature type="compositionally biased region" description="Polar residues" evidence="2">
    <location>
        <begin position="1390"/>
        <end position="1412"/>
    </location>
</feature>
<feature type="compositionally biased region" description="Low complexity" evidence="2">
    <location>
        <begin position="1773"/>
        <end position="1805"/>
    </location>
</feature>
<feature type="compositionally biased region" description="Basic residues" evidence="2">
    <location>
        <begin position="1881"/>
        <end position="1893"/>
    </location>
</feature>
<feature type="compositionally biased region" description="Basic residues" evidence="2">
    <location>
        <begin position="2333"/>
        <end position="2342"/>
    </location>
</feature>
<feature type="compositionally biased region" description="Low complexity" evidence="2">
    <location>
        <begin position="2388"/>
        <end position="2400"/>
    </location>
</feature>
<feature type="compositionally biased region" description="Low complexity" evidence="2">
    <location>
        <begin position="2409"/>
        <end position="2460"/>
    </location>
</feature>
<feature type="compositionally biased region" description="Acidic residues" evidence="2">
    <location>
        <begin position="2525"/>
        <end position="2542"/>
    </location>
</feature>
<feature type="compositionally biased region" description="Low complexity" evidence="2">
    <location>
        <begin position="2557"/>
        <end position="2584"/>
    </location>
</feature>
<feature type="compositionally biased region" description="Low complexity" evidence="2">
    <location>
        <begin position="2615"/>
        <end position="2624"/>
    </location>
</feature>
<feature type="compositionally biased region" description="Polar residues" evidence="2">
    <location>
        <begin position="2663"/>
        <end position="2675"/>
    </location>
</feature>
<feature type="compositionally biased region" description="Low complexity" evidence="2">
    <location>
        <begin position="2841"/>
        <end position="2858"/>
    </location>
</feature>
<feature type="compositionally biased region" description="Basic and acidic residues" evidence="2">
    <location>
        <begin position="2943"/>
        <end position="2953"/>
    </location>
</feature>
<feature type="compositionally biased region" description="Low complexity" evidence="2">
    <location>
        <begin position="3369"/>
        <end position="3391"/>
    </location>
</feature>
<feature type="compositionally biased region" description="Acidic residues" evidence="2">
    <location>
        <begin position="3392"/>
        <end position="3403"/>
    </location>
</feature>
<feature type="compositionally biased region" description="Low complexity" evidence="2">
    <location>
        <begin position="3404"/>
        <end position="3457"/>
    </location>
</feature>
<protein>
    <recommendedName>
        <fullName>AP2/ERF domain-containing protein PFD0985w</fullName>
        <shortName>ApiAP2</shortName>
    </recommendedName>
</protein>
<dbReference type="EMBL" id="AL844503">
    <property type="protein sequence ID" value="CAX63934.1"/>
    <property type="molecule type" value="Genomic_DNA"/>
</dbReference>
<dbReference type="RefSeq" id="XP_002808665.1">
    <property type="nucleotide sequence ID" value="XM_002808619.1"/>
</dbReference>
<dbReference type="BioGRID" id="1207815">
    <property type="interactions" value="16"/>
</dbReference>
<dbReference type="FunCoup" id="Q8I1N6">
    <property type="interactions" value="682"/>
</dbReference>
<dbReference type="IntAct" id="Q8I1N6">
    <property type="interactions" value="16"/>
</dbReference>
<dbReference type="STRING" id="36329.Q8I1N6"/>
<dbReference type="PaxDb" id="5833-PFD0985w"/>
<dbReference type="EnsemblProtists" id="CAX63934">
    <property type="protein sequence ID" value="CAX63934"/>
    <property type="gene ID" value="PF3D7_0420300"/>
</dbReference>
<dbReference type="KEGG" id="pfa:PF3D7_0420300"/>
<dbReference type="VEuPathDB" id="PlasmoDB:PF3D7_0420300"/>
<dbReference type="HOGENOM" id="CLU_225509_0_0_1"/>
<dbReference type="InParanoid" id="Q8I1N6"/>
<dbReference type="OMA" id="NTIFPRN"/>
<dbReference type="OrthoDB" id="348021at2759"/>
<dbReference type="PhylomeDB" id="Q8I1N6"/>
<dbReference type="Proteomes" id="UP000001450">
    <property type="component" value="Chromosome 4"/>
</dbReference>
<dbReference type="GO" id="GO:0005634">
    <property type="term" value="C:nucleus"/>
    <property type="evidence" value="ECO:0007669"/>
    <property type="project" value="UniProtKB-SubCell"/>
</dbReference>
<dbReference type="GO" id="GO:0003677">
    <property type="term" value="F:DNA binding"/>
    <property type="evidence" value="ECO:0007669"/>
    <property type="project" value="UniProtKB-KW"/>
</dbReference>
<dbReference type="GO" id="GO:0003700">
    <property type="term" value="F:DNA-binding transcription factor activity"/>
    <property type="evidence" value="ECO:0007669"/>
    <property type="project" value="InterPro"/>
</dbReference>
<dbReference type="Gene3D" id="1.20.5.2050">
    <property type="match status" value="2"/>
</dbReference>
<dbReference type="InterPro" id="IPR001471">
    <property type="entry name" value="AP2/ERF_dom"/>
</dbReference>
<dbReference type="Pfam" id="PF00847">
    <property type="entry name" value="AP2"/>
    <property type="match status" value="1"/>
</dbReference>
<name>AP2A_PLAF7</name>
<accession>Q8I1N6</accession>
<accession>C0H4B6</accession>
<accession>Q8IFQ8</accession>
<keyword id="KW-0238">DNA-binding</keyword>
<keyword id="KW-0477">Merozoite</keyword>
<keyword id="KW-0539">Nucleus</keyword>
<keyword id="KW-1185">Reference proteome</keyword>
<keyword id="KW-0677">Repeat</keyword>
<keyword id="KW-0804">Transcription</keyword>
<keyword id="KW-0805">Transcription regulation</keyword>